<protein>
    <recommendedName>
        <fullName evidence="1">tRNA uridine 5-carboxymethylaminomethyl modification enzyme MnmG</fullName>
    </recommendedName>
    <alternativeName>
        <fullName evidence="1">Glucose-inhibited division protein A</fullName>
    </alternativeName>
</protein>
<accession>Q7TUJ1</accession>
<organism>
    <name type="scientific">Prochlorococcus marinus (strain MIT 9313)</name>
    <dbReference type="NCBI Taxonomy" id="74547"/>
    <lineage>
        <taxon>Bacteria</taxon>
        <taxon>Bacillati</taxon>
        <taxon>Cyanobacteriota</taxon>
        <taxon>Cyanophyceae</taxon>
        <taxon>Synechococcales</taxon>
        <taxon>Prochlorococcaceae</taxon>
        <taxon>Prochlorococcus</taxon>
    </lineage>
</organism>
<comment type="function">
    <text evidence="1">NAD-binding protein involved in the addition of a carboxymethylaminomethyl (cmnm) group at the wobble position (U34) of certain tRNAs, forming tRNA-cmnm(5)s(2)U34.</text>
</comment>
<comment type="cofactor">
    <cofactor evidence="1">
        <name>FAD</name>
        <dbReference type="ChEBI" id="CHEBI:57692"/>
    </cofactor>
</comment>
<comment type="subunit">
    <text evidence="1">Homodimer. Heterotetramer of two MnmE and two MnmG subunits.</text>
</comment>
<comment type="subcellular location">
    <subcellularLocation>
        <location evidence="1">Cytoplasm</location>
    </subcellularLocation>
</comment>
<comment type="similarity">
    <text evidence="1">Belongs to the MnmG family.</text>
</comment>
<reference key="1">
    <citation type="journal article" date="2003" name="Nature">
        <title>Genome divergence in two Prochlorococcus ecotypes reflects oceanic niche differentiation.</title>
        <authorList>
            <person name="Rocap G."/>
            <person name="Larimer F.W."/>
            <person name="Lamerdin J.E."/>
            <person name="Malfatti S."/>
            <person name="Chain P."/>
            <person name="Ahlgren N.A."/>
            <person name="Arellano A."/>
            <person name="Coleman M."/>
            <person name="Hauser L."/>
            <person name="Hess W.R."/>
            <person name="Johnson Z.I."/>
            <person name="Land M.L."/>
            <person name="Lindell D."/>
            <person name="Post A.F."/>
            <person name="Regala W."/>
            <person name="Shah M."/>
            <person name="Shaw S.L."/>
            <person name="Steglich C."/>
            <person name="Sullivan M.B."/>
            <person name="Ting C.S."/>
            <person name="Tolonen A."/>
            <person name="Webb E.A."/>
            <person name="Zinser E.R."/>
            <person name="Chisholm S.W."/>
        </authorList>
    </citation>
    <scope>NUCLEOTIDE SEQUENCE [LARGE SCALE GENOMIC DNA]</scope>
    <source>
        <strain>MIT 9313</strain>
    </source>
</reference>
<sequence>MPFSAPPTEHFDVIIVGGGHAGCEAAITAARLGLSTALFTLNLDRIAWQPCNPAVGGPAKSQLVHEVDALGGVIGRLADATALQKRVLNASRGPAVWALRAQTDKRLYSRQMLQLLQQTANLSLREAMVTGLEVKGDPSGGGEHWEPAQGHAAQITGVRTYFGSIYRAQAVVLTTGTFLGGQIWVGNQSMPAGRAGEQAAEGLTEALESLGFQTNRLKTGTPARVDRRSIALDQLEEQPSDAADRFFSFDPTAWVSGEQMSCHITRTTASTHQLIKENLELTPIYGGFLDSKGPRYCPSIEDKIVRFADKDSHQIFLEPEGRDTPEIYVQGFSTGLPERLQLDLLRTLPGLEQCVMLRPAYAVDYDYLPATQLSPSLQTKRVKGLFTAGQLNGTTGYEEAAAQGLVAGLNAARLVQGQEQVQFPREGSYIGTMIDDLVSKDLHEPYRVLTSRSEYRLILRGDNADRRLTPLGYQLGLIDARRWQLFQRKQTALEDEKQRLEKQRLKASDPAAPALEAKTGATIKGSITLADLLRRPGVRSADLIEHGLVDPELALGVREGAEIDIKYSGYLQRQQQQIDQLKRQSQRRLPANLDYANISTLSKEAREKLTAVGPLNFAQASQIPGVSKADLTALLVWLELQKRRTLAASGHDR</sequence>
<name>MNMG_PROMM</name>
<feature type="chain" id="PRO_0000117151" description="tRNA uridine 5-carboxymethylaminomethyl modification enzyme MnmG">
    <location>
        <begin position="1"/>
        <end position="653"/>
    </location>
</feature>
<feature type="binding site" evidence="1">
    <location>
        <begin position="17"/>
        <end position="22"/>
    </location>
    <ligand>
        <name>FAD</name>
        <dbReference type="ChEBI" id="CHEBI:57692"/>
    </ligand>
</feature>
<feature type="binding site" evidence="1">
    <location>
        <begin position="293"/>
        <end position="307"/>
    </location>
    <ligand>
        <name>NAD(+)</name>
        <dbReference type="ChEBI" id="CHEBI:57540"/>
    </ligand>
</feature>
<proteinExistence type="inferred from homology"/>
<evidence type="ECO:0000255" key="1">
    <source>
        <dbReference type="HAMAP-Rule" id="MF_00129"/>
    </source>
</evidence>
<keyword id="KW-0963">Cytoplasm</keyword>
<keyword id="KW-0274">FAD</keyword>
<keyword id="KW-0285">Flavoprotein</keyword>
<keyword id="KW-0520">NAD</keyword>
<keyword id="KW-1185">Reference proteome</keyword>
<keyword id="KW-0819">tRNA processing</keyword>
<dbReference type="EMBL" id="BX548175">
    <property type="protein sequence ID" value="CAE22351.1"/>
    <property type="molecule type" value="Genomic_DNA"/>
</dbReference>
<dbReference type="RefSeq" id="WP_011131541.1">
    <property type="nucleotide sequence ID" value="NC_005071.1"/>
</dbReference>
<dbReference type="SMR" id="Q7TUJ1"/>
<dbReference type="KEGG" id="pmt:PMT_2177"/>
<dbReference type="eggNOG" id="COG0445">
    <property type="taxonomic scope" value="Bacteria"/>
</dbReference>
<dbReference type="HOGENOM" id="CLU_007831_2_2_3"/>
<dbReference type="OrthoDB" id="9815560at2"/>
<dbReference type="Proteomes" id="UP000001423">
    <property type="component" value="Chromosome"/>
</dbReference>
<dbReference type="GO" id="GO:0005737">
    <property type="term" value="C:cytoplasm"/>
    <property type="evidence" value="ECO:0007669"/>
    <property type="project" value="UniProtKB-SubCell"/>
</dbReference>
<dbReference type="GO" id="GO:0050660">
    <property type="term" value="F:flavin adenine dinucleotide binding"/>
    <property type="evidence" value="ECO:0007669"/>
    <property type="project" value="UniProtKB-UniRule"/>
</dbReference>
<dbReference type="GO" id="GO:0030488">
    <property type="term" value="P:tRNA methylation"/>
    <property type="evidence" value="ECO:0007669"/>
    <property type="project" value="TreeGrafter"/>
</dbReference>
<dbReference type="GO" id="GO:0002098">
    <property type="term" value="P:tRNA wobble uridine modification"/>
    <property type="evidence" value="ECO:0007669"/>
    <property type="project" value="InterPro"/>
</dbReference>
<dbReference type="FunFam" id="1.10.10.1800:FF:000001">
    <property type="entry name" value="tRNA uridine 5-carboxymethylaminomethyl modification enzyme MnmG"/>
    <property type="match status" value="1"/>
</dbReference>
<dbReference type="FunFam" id="1.10.150.570:FF:000001">
    <property type="entry name" value="tRNA uridine 5-carboxymethylaminomethyl modification enzyme MnmG"/>
    <property type="match status" value="1"/>
</dbReference>
<dbReference type="FunFam" id="3.50.50.60:FF:000094">
    <property type="entry name" value="tRNA uridine 5-carboxymethylaminomethyl modification enzyme MnmG"/>
    <property type="match status" value="1"/>
</dbReference>
<dbReference type="FunFam" id="3.50.50.60:FF:000119">
    <property type="entry name" value="tRNA uridine 5-carboxymethylaminomethyl modification enzyme MnmG"/>
    <property type="match status" value="1"/>
</dbReference>
<dbReference type="Gene3D" id="3.50.50.60">
    <property type="entry name" value="FAD/NAD(P)-binding domain"/>
    <property type="match status" value="2"/>
</dbReference>
<dbReference type="Gene3D" id="1.10.150.570">
    <property type="entry name" value="GidA associated domain, C-terminal subdomain"/>
    <property type="match status" value="1"/>
</dbReference>
<dbReference type="Gene3D" id="1.10.10.1800">
    <property type="entry name" value="tRNA uridine 5-carboxymethylaminomethyl modification enzyme MnmG/GidA"/>
    <property type="match status" value="1"/>
</dbReference>
<dbReference type="HAMAP" id="MF_00129">
    <property type="entry name" value="MnmG_GidA"/>
    <property type="match status" value="1"/>
</dbReference>
<dbReference type="InterPro" id="IPR036188">
    <property type="entry name" value="FAD/NAD-bd_sf"/>
</dbReference>
<dbReference type="InterPro" id="IPR049312">
    <property type="entry name" value="GIDA_C_N"/>
</dbReference>
<dbReference type="InterPro" id="IPR004416">
    <property type="entry name" value="MnmG"/>
</dbReference>
<dbReference type="InterPro" id="IPR002218">
    <property type="entry name" value="MnmG-rel"/>
</dbReference>
<dbReference type="InterPro" id="IPR020595">
    <property type="entry name" value="MnmG-rel_CS"/>
</dbReference>
<dbReference type="InterPro" id="IPR026904">
    <property type="entry name" value="MnmG_C"/>
</dbReference>
<dbReference type="InterPro" id="IPR047001">
    <property type="entry name" value="MnmG_C_subdom"/>
</dbReference>
<dbReference type="InterPro" id="IPR044920">
    <property type="entry name" value="MnmG_C_subdom_sf"/>
</dbReference>
<dbReference type="InterPro" id="IPR040131">
    <property type="entry name" value="MnmG_N"/>
</dbReference>
<dbReference type="NCBIfam" id="TIGR00136">
    <property type="entry name" value="mnmG_gidA"/>
    <property type="match status" value="1"/>
</dbReference>
<dbReference type="PANTHER" id="PTHR11806">
    <property type="entry name" value="GLUCOSE INHIBITED DIVISION PROTEIN A"/>
    <property type="match status" value="1"/>
</dbReference>
<dbReference type="PANTHER" id="PTHR11806:SF0">
    <property type="entry name" value="PROTEIN MTO1 HOMOLOG, MITOCHONDRIAL"/>
    <property type="match status" value="1"/>
</dbReference>
<dbReference type="Pfam" id="PF01134">
    <property type="entry name" value="GIDA"/>
    <property type="match status" value="1"/>
</dbReference>
<dbReference type="Pfam" id="PF21680">
    <property type="entry name" value="GIDA_C_1st"/>
    <property type="match status" value="1"/>
</dbReference>
<dbReference type="Pfam" id="PF13932">
    <property type="entry name" value="SAM_GIDA_C"/>
    <property type="match status" value="1"/>
</dbReference>
<dbReference type="SMART" id="SM01228">
    <property type="entry name" value="GIDA_assoc_3"/>
    <property type="match status" value="1"/>
</dbReference>
<dbReference type="SUPFAM" id="SSF51905">
    <property type="entry name" value="FAD/NAD(P)-binding domain"/>
    <property type="match status" value="1"/>
</dbReference>
<dbReference type="PROSITE" id="PS01280">
    <property type="entry name" value="GIDA_1"/>
    <property type="match status" value="1"/>
</dbReference>
<dbReference type="PROSITE" id="PS01281">
    <property type="entry name" value="GIDA_2"/>
    <property type="match status" value="1"/>
</dbReference>
<gene>
    <name evidence="1" type="primary">mnmG</name>
    <name evidence="1" type="synonym">gidA</name>
    <name type="ordered locus">PMT_2177</name>
</gene>